<dbReference type="EMBL" id="U39205">
    <property type="protein sequence ID" value="AAB68313.1"/>
    <property type="status" value="ALT_SEQ"/>
    <property type="molecule type" value="Genomic_DNA"/>
</dbReference>
<dbReference type="EMBL" id="AY558331">
    <property type="protein sequence ID" value="AAS56657.1"/>
    <property type="status" value="ALT_SEQ"/>
    <property type="molecule type" value="Genomic_DNA"/>
</dbReference>
<dbReference type="EMBL" id="BK006949">
    <property type="protein sequence ID" value="DAA11378.1"/>
    <property type="molecule type" value="Genomic_DNA"/>
</dbReference>
<dbReference type="PIR" id="S61090">
    <property type="entry name" value="S61090"/>
</dbReference>
<dbReference type="RefSeq" id="NP_015273.2">
    <molecule id="Q02803-1"/>
    <property type="nucleotide sequence ID" value="NM_001183866.4"/>
</dbReference>
<dbReference type="BioGRID" id="36128">
    <property type="interactions" value="50"/>
</dbReference>
<dbReference type="DIP" id="DIP-5057N"/>
<dbReference type="FunCoup" id="Q02803">
    <property type="interactions" value="41"/>
</dbReference>
<dbReference type="STRING" id="4932.YPL052W"/>
<dbReference type="GlyGen" id="Q02803">
    <property type="glycosylation" value="3 sites, 1 O-linked glycan (3 sites)"/>
</dbReference>
<dbReference type="iPTMnet" id="Q02803"/>
<dbReference type="PaxDb" id="4932-YPL052W"/>
<dbReference type="PeptideAtlas" id="Q02803"/>
<dbReference type="EnsemblFungi" id="YPL052W_mRNA">
    <molecule id="Q02803-1"/>
    <property type="protein sequence ID" value="YPL052W"/>
    <property type="gene ID" value="YPL052W"/>
</dbReference>
<dbReference type="GeneID" id="856055"/>
<dbReference type="KEGG" id="sce:YPL052W"/>
<dbReference type="AGR" id="SGD:S000005973"/>
<dbReference type="SGD" id="S000005973">
    <property type="gene designation" value="OAZ1"/>
</dbReference>
<dbReference type="VEuPathDB" id="FungiDB:YPL052W"/>
<dbReference type="eggNOG" id="ENOG502RZPH">
    <property type="taxonomic scope" value="Eukaryota"/>
</dbReference>
<dbReference type="HOGENOM" id="CLU_087076_0_0_1"/>
<dbReference type="InParanoid" id="Q02803"/>
<dbReference type="OMA" id="NLHWIGA"/>
<dbReference type="OrthoDB" id="4033519at2759"/>
<dbReference type="BioCyc" id="YEAST:G3O-33965-MONOMER"/>
<dbReference type="BioGRID-ORCS" id="856055">
    <property type="hits" value="0 hits in 10 CRISPR screens"/>
</dbReference>
<dbReference type="PRO" id="PR:Q02803"/>
<dbReference type="Proteomes" id="UP000002311">
    <property type="component" value="Chromosome XVI"/>
</dbReference>
<dbReference type="RNAct" id="Q02803">
    <property type="molecule type" value="protein"/>
</dbReference>
<dbReference type="GO" id="GO:0005737">
    <property type="term" value="C:cytoplasm"/>
    <property type="evidence" value="ECO:0000305"/>
    <property type="project" value="SGD"/>
</dbReference>
<dbReference type="GO" id="GO:0008073">
    <property type="term" value="F:ornithine decarboxylase inhibitor activity"/>
    <property type="evidence" value="ECO:0000314"/>
    <property type="project" value="SGD"/>
</dbReference>
<dbReference type="GO" id="GO:2001125">
    <property type="term" value="P:negative regulation of translational frameshifting"/>
    <property type="evidence" value="ECO:0000315"/>
    <property type="project" value="SGD"/>
</dbReference>
<dbReference type="GO" id="GO:0061136">
    <property type="term" value="P:regulation of proteasomal protein catabolic process"/>
    <property type="evidence" value="ECO:0000314"/>
    <property type="project" value="SGD"/>
</dbReference>
<dbReference type="GO" id="GO:0075523">
    <property type="term" value="P:viral translational frameshifting"/>
    <property type="evidence" value="ECO:0007669"/>
    <property type="project" value="UniProtKB-KW"/>
</dbReference>
<reference key="1">
    <citation type="journal article" date="1997" name="Nature">
        <title>The nucleotide sequence of Saccharomyces cerevisiae chromosome XVI.</title>
        <authorList>
            <person name="Bussey H."/>
            <person name="Storms R.K."/>
            <person name="Ahmed A."/>
            <person name="Albermann K."/>
            <person name="Allen E."/>
            <person name="Ansorge W."/>
            <person name="Araujo R."/>
            <person name="Aparicio A."/>
            <person name="Barrell B.G."/>
            <person name="Badcock K."/>
            <person name="Benes V."/>
            <person name="Botstein D."/>
            <person name="Bowman S."/>
            <person name="Brueckner M."/>
            <person name="Carpenter J."/>
            <person name="Cherry J.M."/>
            <person name="Chung E."/>
            <person name="Churcher C.M."/>
            <person name="Coster F."/>
            <person name="Davis K."/>
            <person name="Davis R.W."/>
            <person name="Dietrich F.S."/>
            <person name="Delius H."/>
            <person name="DiPaolo T."/>
            <person name="Dubois E."/>
            <person name="Duesterhoeft A."/>
            <person name="Duncan M."/>
            <person name="Floeth M."/>
            <person name="Fortin N."/>
            <person name="Friesen J.D."/>
            <person name="Fritz C."/>
            <person name="Goffeau A."/>
            <person name="Hall J."/>
            <person name="Hebling U."/>
            <person name="Heumann K."/>
            <person name="Hilbert H."/>
            <person name="Hillier L.W."/>
            <person name="Hunicke-Smith S."/>
            <person name="Hyman R.W."/>
            <person name="Johnston M."/>
            <person name="Kalman S."/>
            <person name="Kleine K."/>
            <person name="Komp C."/>
            <person name="Kurdi O."/>
            <person name="Lashkari D."/>
            <person name="Lew H."/>
            <person name="Lin A."/>
            <person name="Lin D."/>
            <person name="Louis E.J."/>
            <person name="Marathe R."/>
            <person name="Messenguy F."/>
            <person name="Mewes H.-W."/>
            <person name="Mirtipati S."/>
            <person name="Moestl D."/>
            <person name="Mueller-Auer S."/>
            <person name="Namath A."/>
            <person name="Nentwich U."/>
            <person name="Oefner P."/>
            <person name="Pearson D."/>
            <person name="Petel F.X."/>
            <person name="Pohl T.M."/>
            <person name="Purnelle B."/>
            <person name="Rajandream M.A."/>
            <person name="Rechmann S."/>
            <person name="Rieger M."/>
            <person name="Riles L."/>
            <person name="Roberts D."/>
            <person name="Schaefer M."/>
            <person name="Scharfe M."/>
            <person name="Scherens B."/>
            <person name="Schramm S."/>
            <person name="Schroeder M."/>
            <person name="Sdicu A.-M."/>
            <person name="Tettelin H."/>
            <person name="Urrestarazu L.A."/>
            <person name="Ushinsky S."/>
            <person name="Vierendeels F."/>
            <person name="Vissers S."/>
            <person name="Voss H."/>
            <person name="Walsh S.V."/>
            <person name="Wambutt R."/>
            <person name="Wang Y."/>
            <person name="Wedler E."/>
            <person name="Wedler H."/>
            <person name="Winnett E."/>
            <person name="Zhong W.-W."/>
            <person name="Zollner A."/>
            <person name="Vo D.H."/>
            <person name="Hani J."/>
        </authorList>
    </citation>
    <scope>NUCLEOTIDE SEQUENCE [LARGE SCALE GENOMIC DNA]</scope>
    <source>
        <strain>ATCC 204508 / S288c</strain>
    </source>
</reference>
<reference key="2">
    <citation type="journal article" date="2014" name="G3 (Bethesda)">
        <title>The reference genome sequence of Saccharomyces cerevisiae: Then and now.</title>
        <authorList>
            <person name="Engel S.R."/>
            <person name="Dietrich F.S."/>
            <person name="Fisk D.G."/>
            <person name="Binkley G."/>
            <person name="Balakrishnan R."/>
            <person name="Costanzo M.C."/>
            <person name="Dwight S.S."/>
            <person name="Hitz B.C."/>
            <person name="Karra K."/>
            <person name="Nash R.S."/>
            <person name="Weng S."/>
            <person name="Wong E.D."/>
            <person name="Lloyd P."/>
            <person name="Skrzypek M.S."/>
            <person name="Miyasato S.R."/>
            <person name="Simison M."/>
            <person name="Cherry J.M."/>
        </authorList>
    </citation>
    <scope>GENOME REANNOTATION</scope>
    <source>
        <strain>ATCC 204508 / S288c</strain>
    </source>
</reference>
<reference key="3">
    <citation type="journal article" date="2007" name="Genome Res.">
        <title>Approaching a complete repository of sequence-verified protein-encoding clones for Saccharomyces cerevisiae.</title>
        <authorList>
            <person name="Hu Y."/>
            <person name="Rolfs A."/>
            <person name="Bhullar B."/>
            <person name="Murthy T.V.S."/>
            <person name="Zhu C."/>
            <person name="Berger M.F."/>
            <person name="Camargo A.A."/>
            <person name="Kelley F."/>
            <person name="McCarron S."/>
            <person name="Jepson D."/>
            <person name="Richardson A."/>
            <person name="Raphael J."/>
            <person name="Moreira D."/>
            <person name="Taycher E."/>
            <person name="Zuo D."/>
            <person name="Mohr S."/>
            <person name="Kane M.F."/>
            <person name="Williamson J."/>
            <person name="Simpson A.J.G."/>
            <person name="Bulyk M.L."/>
            <person name="Harlow E."/>
            <person name="Marsischky G."/>
            <person name="Kolodner R.D."/>
            <person name="LaBaer J."/>
        </authorList>
    </citation>
    <scope>NUCLEOTIDE SEQUENCE [GENOMIC DNA]</scope>
    <source>
        <strain>ATCC 204508 / S288c</strain>
    </source>
</reference>
<reference key="4">
    <citation type="journal article" date="2004" name="EMBO J.">
        <title>Polyamines regulate their synthesis by inducing expression and blocking degradation of ODC antizyme.</title>
        <authorList>
            <person name="Palanimurugan R."/>
            <person name="Scheel H."/>
            <person name="Hofmann K."/>
            <person name="Dohmen R.J."/>
        </authorList>
    </citation>
    <scope>RIBOSOMAL FRAMESHIFT</scope>
    <scope>FUNCTION</scope>
    <scope>INTERACTION WITH SPE1</scope>
</reference>
<reference key="5">
    <citation type="journal article" date="2008" name="J. Biol. Chem.">
        <title>Yeast antizyme mediates degradation of yeast ornithine decarboxylase by yeast but not by mammalian proteasome: new insights on yeast antizyme.</title>
        <authorList>
            <person name="Porat Z."/>
            <person name="Landau G."/>
            <person name="Bercovich Z."/>
            <person name="Krutauz D."/>
            <person name="Glickman M."/>
            <person name="Kahana C."/>
        </authorList>
    </citation>
    <scope>FUNCTION</scope>
</reference>
<reference key="6">
    <citation type="journal article" date="2011" name="Nature">
        <title>Polyamine sensing by nascent ornithine decarboxylase antizyme stimulates decoding of its mRNA.</title>
        <authorList>
            <person name="Kurian L."/>
            <person name="Palanimurugan R."/>
            <person name="Goedderz D."/>
            <person name="Dohmen R.J."/>
        </authorList>
    </citation>
    <scope>RIBOSOMAL FRAMESHIFT</scope>
</reference>
<name>OAZ_YEAST</name>
<gene>
    <name type="primary">OAZ1</name>
    <name type="ordered locus">YPL052W</name>
</gene>
<comment type="function">
    <text evidence="1 2">Ornithine decarboxylase (ODC) antizyme protein that negatively regulates ODC activity and intracellular polyamine biosynthesis in response to increased intracellular polyamine levels (PubMed:15538383). Binds to ODC/SPE1 monomers, inhibiting the assembly of the functional ODC homodimer, and targets the monomers for ubiquitin-independent proteolytic destruction by the 26S proteasome (PubMed:18089576).</text>
</comment>
<comment type="subunit">
    <text evidence="1">Interacts with ODC/SPE1 and thereby sterically blocks ODC homodimerization.</text>
</comment>
<comment type="alternative products">
    <event type="ribosomal frameshifting"/>
    <isoform>
        <id>Q02803-1</id>
        <name>1</name>
        <sequence type="displayed"/>
    </isoform>
    <text evidence="1 3">A ribosomal frameshift occurs between the codons for Ala-69 and Asp-70. An autoregulatory mechanism enables modulation of frameshifting according to the cellular concentration of polyamines.</text>
</comment>
<comment type="similarity">
    <text evidence="4">Belongs to the ODC antizyme family.</text>
</comment>
<feature type="chain" id="PRO_0000220871" description="Ornithine decarboxylase antizyme">
    <location>
        <begin position="1"/>
        <end position="292"/>
    </location>
</feature>
<proteinExistence type="evidence at protein level"/>
<organism>
    <name type="scientific">Saccharomyces cerevisiae (strain ATCC 204508 / S288c)</name>
    <name type="common">Baker's yeast</name>
    <dbReference type="NCBI Taxonomy" id="559292"/>
    <lineage>
        <taxon>Eukaryota</taxon>
        <taxon>Fungi</taxon>
        <taxon>Dikarya</taxon>
        <taxon>Ascomycota</taxon>
        <taxon>Saccharomycotina</taxon>
        <taxon>Saccharomycetes</taxon>
        <taxon>Saccharomycetales</taxon>
        <taxon>Saccharomycetaceae</taxon>
        <taxon>Saccharomyces</taxon>
    </lineage>
</organism>
<accession>Q02803</accession>
<accession>D6W3W2</accession>
<evidence type="ECO:0000269" key="1">
    <source>
    </source>
</evidence>
<evidence type="ECO:0000269" key="2">
    <source>
    </source>
</evidence>
<evidence type="ECO:0000269" key="3">
    <source>
    </source>
</evidence>
<evidence type="ECO:0000305" key="4"/>
<keyword id="KW-1185">Reference proteome</keyword>
<keyword id="KW-0688">Ribosomal frameshifting</keyword>
<sequence length="292" mass="34045">MYEVIQKRKTKIINVLQSPELMRLIEDPSNLGISLHFPVSSLLKSNKCTPMPKLSTYSLASGGFKDWCADIPLDVPPEIDIIDFYWDVILCMESQFILDYNVPSKNKGNNQKSVAKLLKNKLVNDMKTTLKRLIYNENTKQYKNNNSHDGYNWRKLGSQYFILYLPLFTQELIWCKLNENYFHVVLPSLLNSRNVHDNHSTYINKDWLLALLELTSNLNQNFKFEYMKLRLYILRDDLINNGLDLLKNLNWVGGKLIKNEDREVLLNSTDLATDSISHLLGDENFVILEFEC</sequence>
<protein>
    <recommendedName>
        <fullName>Ornithine decarboxylase antizyme</fullName>
        <shortName>ODC-Az</shortName>
    </recommendedName>
</protein>